<feature type="chain" id="PRO_0000429562" description="Zinc finger BED domain-containing protein RICESLEEPER 1">
    <location>
        <begin position="1"/>
        <end position="722"/>
    </location>
</feature>
<feature type="zinc finger region" description="BED-type" evidence="2">
    <location>
        <begin position="66"/>
        <end position="126"/>
    </location>
</feature>
<feature type="region of interest" description="Disordered" evidence="3">
    <location>
        <begin position="572"/>
        <end position="592"/>
    </location>
</feature>
<feature type="region of interest" description="HATC (Hobo-Ac-Tam3) domain">
    <location>
        <begin position="617"/>
        <end position="702"/>
    </location>
</feature>
<feature type="compositionally biased region" description="Polar residues" evidence="3">
    <location>
        <begin position="580"/>
        <end position="592"/>
    </location>
</feature>
<feature type="binding site" evidence="2">
    <location>
        <position position="89"/>
    </location>
    <ligand>
        <name>Zn(2+)</name>
        <dbReference type="ChEBI" id="CHEBI:29105"/>
    </ligand>
</feature>
<feature type="binding site" evidence="2">
    <location>
        <position position="92"/>
    </location>
    <ligand>
        <name>Zn(2+)</name>
        <dbReference type="ChEBI" id="CHEBI:29105"/>
    </ligand>
</feature>
<feature type="binding site" evidence="2">
    <location>
        <position position="113"/>
    </location>
    <ligand>
        <name>Zn(2+)</name>
        <dbReference type="ChEBI" id="CHEBI:29105"/>
    </ligand>
</feature>
<feature type="binding site" evidence="2">
    <location>
        <position position="119"/>
    </location>
    <ligand>
        <name>Zn(2+)</name>
        <dbReference type="ChEBI" id="CHEBI:29105"/>
    </ligand>
</feature>
<keyword id="KW-0238">DNA-binding</keyword>
<keyword id="KW-0479">Metal-binding</keyword>
<keyword id="KW-0539">Nucleus</keyword>
<keyword id="KW-1185">Reference proteome</keyword>
<keyword id="KW-0804">Transcription</keyword>
<keyword id="KW-0805">Transcription regulation</keyword>
<keyword id="KW-0862">Zinc</keyword>
<keyword id="KW-0863">Zinc-finger</keyword>
<evidence type="ECO:0000250" key="1"/>
<evidence type="ECO:0000255" key="2">
    <source>
        <dbReference type="PROSITE-ProRule" id="PRU00027"/>
    </source>
</evidence>
<evidence type="ECO:0000256" key="3">
    <source>
        <dbReference type="SAM" id="MobiDB-lite"/>
    </source>
</evidence>
<evidence type="ECO:0000269" key="4">
    <source>
    </source>
</evidence>
<name>RSLE1_ORYSJ</name>
<gene>
    <name type="ordered locus">Os05g0239150</name>
    <name type="ordered locus">LOC_Os05g14940</name>
    <name type="ORF">OJ1122_B08</name>
    <name type="ORF">OsJ_17746</name>
</gene>
<reference key="1">
    <citation type="journal article" date="2005" name="Mol. Genet. Genomics">
        <title>A fine physical map of the rice chromosome 5.</title>
        <authorList>
            <person name="Cheng C.-H."/>
            <person name="Chung M.C."/>
            <person name="Liu S.-M."/>
            <person name="Chen S.-K."/>
            <person name="Kao F.Y."/>
            <person name="Lin S.-J."/>
            <person name="Hsiao S.-H."/>
            <person name="Tseng I.C."/>
            <person name="Hsing Y.-I.C."/>
            <person name="Wu H.-P."/>
            <person name="Chen C.-S."/>
            <person name="Shaw J.-F."/>
            <person name="Wu J."/>
            <person name="Matsumoto T."/>
            <person name="Sasaki T."/>
            <person name="Chen H.-C."/>
            <person name="Chow T.-Y."/>
        </authorList>
    </citation>
    <scope>NUCLEOTIDE SEQUENCE [LARGE SCALE GENOMIC DNA]</scope>
    <source>
        <strain>cv. Nipponbare</strain>
    </source>
</reference>
<reference key="2">
    <citation type="journal article" date="2005" name="Nature">
        <title>The map-based sequence of the rice genome.</title>
        <authorList>
            <consortium name="International rice genome sequencing project (IRGSP)"/>
        </authorList>
    </citation>
    <scope>NUCLEOTIDE SEQUENCE [LARGE SCALE GENOMIC DNA]</scope>
    <source>
        <strain>cv. Nipponbare</strain>
    </source>
</reference>
<reference key="3">
    <citation type="journal article" date="2008" name="Nucleic Acids Res.">
        <title>The rice annotation project database (RAP-DB): 2008 update.</title>
        <authorList>
            <consortium name="The rice annotation project (RAP)"/>
        </authorList>
    </citation>
    <scope>GENOME REANNOTATION</scope>
    <source>
        <strain>cv. Nipponbare</strain>
    </source>
</reference>
<reference key="4">
    <citation type="journal article" date="2013" name="Rice">
        <title>Improvement of the Oryza sativa Nipponbare reference genome using next generation sequence and optical map data.</title>
        <authorList>
            <person name="Kawahara Y."/>
            <person name="de la Bastide M."/>
            <person name="Hamilton J.P."/>
            <person name="Kanamori H."/>
            <person name="McCombie W.R."/>
            <person name="Ouyang S."/>
            <person name="Schwartz D.C."/>
            <person name="Tanaka T."/>
            <person name="Wu J."/>
            <person name="Zhou S."/>
            <person name="Childs K.L."/>
            <person name="Davidson R.M."/>
            <person name="Lin H."/>
            <person name="Quesada-Ocampo L."/>
            <person name="Vaillancourt B."/>
            <person name="Sakai H."/>
            <person name="Lee S.S."/>
            <person name="Kim J."/>
            <person name="Numa H."/>
            <person name="Itoh T."/>
            <person name="Buell C.R."/>
            <person name="Matsumoto T."/>
        </authorList>
    </citation>
    <scope>GENOME REANNOTATION</scope>
    <source>
        <strain>cv. Nipponbare</strain>
    </source>
</reference>
<reference key="5">
    <citation type="journal article" date="2005" name="PLoS Biol.">
        <title>The genomes of Oryza sativa: a history of duplications.</title>
        <authorList>
            <person name="Yu J."/>
            <person name="Wang J."/>
            <person name="Lin W."/>
            <person name="Li S."/>
            <person name="Li H."/>
            <person name="Zhou J."/>
            <person name="Ni P."/>
            <person name="Dong W."/>
            <person name="Hu S."/>
            <person name="Zeng C."/>
            <person name="Zhang J."/>
            <person name="Zhang Y."/>
            <person name="Li R."/>
            <person name="Xu Z."/>
            <person name="Li S."/>
            <person name="Li X."/>
            <person name="Zheng H."/>
            <person name="Cong L."/>
            <person name="Lin L."/>
            <person name="Yin J."/>
            <person name="Geng J."/>
            <person name="Li G."/>
            <person name="Shi J."/>
            <person name="Liu J."/>
            <person name="Lv H."/>
            <person name="Li J."/>
            <person name="Wang J."/>
            <person name="Deng Y."/>
            <person name="Ran L."/>
            <person name="Shi X."/>
            <person name="Wang X."/>
            <person name="Wu Q."/>
            <person name="Li C."/>
            <person name="Ren X."/>
            <person name="Wang J."/>
            <person name="Wang X."/>
            <person name="Li D."/>
            <person name="Liu D."/>
            <person name="Zhang X."/>
            <person name="Ji Z."/>
            <person name="Zhao W."/>
            <person name="Sun Y."/>
            <person name="Zhang Z."/>
            <person name="Bao J."/>
            <person name="Han Y."/>
            <person name="Dong L."/>
            <person name="Ji J."/>
            <person name="Chen P."/>
            <person name="Wu S."/>
            <person name="Liu J."/>
            <person name="Xiao Y."/>
            <person name="Bu D."/>
            <person name="Tan J."/>
            <person name="Yang L."/>
            <person name="Ye C."/>
            <person name="Zhang J."/>
            <person name="Xu J."/>
            <person name="Zhou Y."/>
            <person name="Yu Y."/>
            <person name="Zhang B."/>
            <person name="Zhuang S."/>
            <person name="Wei H."/>
            <person name="Liu B."/>
            <person name="Lei M."/>
            <person name="Yu H."/>
            <person name="Li Y."/>
            <person name="Xu H."/>
            <person name="Wei S."/>
            <person name="He X."/>
            <person name="Fang L."/>
            <person name="Zhang Z."/>
            <person name="Zhang Y."/>
            <person name="Huang X."/>
            <person name="Su Z."/>
            <person name="Tong W."/>
            <person name="Li J."/>
            <person name="Tong Z."/>
            <person name="Li S."/>
            <person name="Ye J."/>
            <person name="Wang L."/>
            <person name="Fang L."/>
            <person name="Lei T."/>
            <person name="Chen C.-S."/>
            <person name="Chen H.-C."/>
            <person name="Xu Z."/>
            <person name="Li H."/>
            <person name="Huang H."/>
            <person name="Zhang F."/>
            <person name="Xu H."/>
            <person name="Li N."/>
            <person name="Zhao C."/>
            <person name="Li S."/>
            <person name="Dong L."/>
            <person name="Huang Y."/>
            <person name="Li L."/>
            <person name="Xi Y."/>
            <person name="Qi Q."/>
            <person name="Li W."/>
            <person name="Zhang B."/>
            <person name="Hu W."/>
            <person name="Zhang Y."/>
            <person name="Tian X."/>
            <person name="Jiao Y."/>
            <person name="Liang X."/>
            <person name="Jin J."/>
            <person name="Gao L."/>
            <person name="Zheng W."/>
            <person name="Hao B."/>
            <person name="Liu S.-M."/>
            <person name="Wang W."/>
            <person name="Yuan L."/>
            <person name="Cao M."/>
            <person name="McDermott J."/>
            <person name="Samudrala R."/>
            <person name="Wang J."/>
            <person name="Wong G.K.-S."/>
            <person name="Yang H."/>
        </authorList>
    </citation>
    <scope>NUCLEOTIDE SEQUENCE [LARGE SCALE GENOMIC DNA]</scope>
    <source>
        <strain>cv. Nipponbare</strain>
    </source>
</reference>
<reference key="6">
    <citation type="journal article" date="2012" name="BMC Plant Biol.">
        <title>The SLEEPER genes: a transposase-derived angiosperm-specific gene family.</title>
        <authorList>
            <person name="Knip M."/>
            <person name="de Pater S."/>
            <person name="Hooykaas P.J."/>
        </authorList>
    </citation>
    <scope>FUNCTION</scope>
    <scope>DISRUPTION PHENOTYPE</scope>
</reference>
<protein>
    <recommendedName>
        <fullName>Zinc finger BED domain-containing protein RICESLEEPER 1</fullName>
    </recommendedName>
    <alternativeName>
        <fullName>Transposase-like protein RICESLEEPER 1</fullName>
    </alternativeName>
</protein>
<sequence>MAEETSNDNLVVQGNEIVPSNGEALAEEVQGDELVLAEDLIQGDEVQGNELVSAEMSIPPTSRRRRKKSLVWEHFTIEAVSGGATRACCKLCKQTFAYSSGSKIAGTSHLKRHITLGSCPKIKNQEHKLLLTPAGGTDNDGEGTVERPSKRRYRYTGYANAAFDQERSCSYLAKMIILHDYPLHIVQQPAFTTFIDSLQPRFRVVDVETMEWEVYAVYQKEKENLMQAFNTMPGRISLAIGLWTTSQTLGYVSLAGQFIDSEWKMHRRMLNFMMVSSPHSENALSEAISTSLSDWNMKDKLFTITLDNDCSSHDIYSANLRDYLSNKNNLMLKGQLFVVRCYAHILNAVAQDVIASIHGVIYNIRESIKFIKASPSCEEKFAEIALQLEIPSTKTLCLDVTTQWNTTYLMLLAALDYKQAFSTLETSDDNYNEAPSAEDWKKVEAACNYLKLLYDSAHSIMAAANPTSNLFFHEAWKLQLELSNATGREDPVFSSIAKDMHERFDKYWKDCNLVLAIAVVMDPRFKMKLVEFSYSKIYGVEAAKYVKVVDDAVHELYNEYVAQPLPLTPAYVEQGGGNNAPASENSTQATAPSTGDGLVDFDMYLSEIATSQPTKSELEQYLDESLTPRIQEFDILNWWKLNTLKYPTLSKMARDILAIPMSMVSSGNSIFSAGTGTRMLDDYRSSSRPEIVEALVCAKDWLQYLPATPEAPSTALVKVDAA</sequence>
<organism>
    <name type="scientific">Oryza sativa subsp. japonica</name>
    <name type="common">Rice</name>
    <dbReference type="NCBI Taxonomy" id="39947"/>
    <lineage>
        <taxon>Eukaryota</taxon>
        <taxon>Viridiplantae</taxon>
        <taxon>Streptophyta</taxon>
        <taxon>Embryophyta</taxon>
        <taxon>Tracheophyta</taxon>
        <taxon>Spermatophyta</taxon>
        <taxon>Magnoliopsida</taxon>
        <taxon>Liliopsida</taxon>
        <taxon>Poales</taxon>
        <taxon>Poaceae</taxon>
        <taxon>BOP clade</taxon>
        <taxon>Oryzoideae</taxon>
        <taxon>Oryzeae</taxon>
        <taxon>Oryzinae</taxon>
        <taxon>Oryza</taxon>
        <taxon>Oryza sativa</taxon>
    </lineage>
</organism>
<proteinExistence type="inferred from homology"/>
<accession>B9FJG3</accession>
<dbReference type="EMBL" id="AC105768">
    <property type="status" value="NOT_ANNOTATED_CDS"/>
    <property type="molecule type" value="Genomic_DNA"/>
</dbReference>
<dbReference type="EMBL" id="AP008211">
    <property type="protein sequence ID" value="BAH93016.1"/>
    <property type="molecule type" value="Genomic_DNA"/>
</dbReference>
<dbReference type="EMBL" id="AP014961">
    <property type="status" value="NOT_ANNOTATED_CDS"/>
    <property type="molecule type" value="Genomic_DNA"/>
</dbReference>
<dbReference type="EMBL" id="CM000142">
    <property type="protein sequence ID" value="EEE62941.1"/>
    <property type="molecule type" value="Genomic_DNA"/>
</dbReference>
<dbReference type="RefSeq" id="XP_015637520.1">
    <property type="nucleotide sequence ID" value="XM_015782034.1"/>
</dbReference>
<dbReference type="BioGRID" id="1212658">
    <property type="interactions" value="1"/>
</dbReference>
<dbReference type="FunCoup" id="B9FJG3">
    <property type="interactions" value="1549"/>
</dbReference>
<dbReference type="STRING" id="39947.B9FJG3"/>
<dbReference type="iPTMnet" id="B9FJG3"/>
<dbReference type="PaxDb" id="39947-B9FJG3"/>
<dbReference type="KEGG" id="dosa:Os05g0239150"/>
<dbReference type="InParanoid" id="B9FJG3"/>
<dbReference type="OrthoDB" id="2610923at2759"/>
<dbReference type="Proteomes" id="UP000000763">
    <property type="component" value="Chromosome 5"/>
</dbReference>
<dbReference type="Proteomes" id="UP000007752">
    <property type="component" value="Chromosome 5"/>
</dbReference>
<dbReference type="Proteomes" id="UP000059680">
    <property type="component" value="Chromosome 5"/>
</dbReference>
<dbReference type="GO" id="GO:0005634">
    <property type="term" value="C:nucleus"/>
    <property type="evidence" value="ECO:0007669"/>
    <property type="project" value="UniProtKB-SubCell"/>
</dbReference>
<dbReference type="GO" id="GO:0003677">
    <property type="term" value="F:DNA binding"/>
    <property type="evidence" value="ECO:0007669"/>
    <property type="project" value="UniProtKB-KW"/>
</dbReference>
<dbReference type="GO" id="GO:0046983">
    <property type="term" value="F:protein dimerization activity"/>
    <property type="evidence" value="ECO:0007669"/>
    <property type="project" value="InterPro"/>
</dbReference>
<dbReference type="GO" id="GO:0008270">
    <property type="term" value="F:zinc ion binding"/>
    <property type="evidence" value="ECO:0007669"/>
    <property type="project" value="UniProtKB-KW"/>
</dbReference>
<dbReference type="GO" id="GO:0009791">
    <property type="term" value="P:post-embryonic development"/>
    <property type="evidence" value="ECO:0000315"/>
    <property type="project" value="UniProtKB"/>
</dbReference>
<dbReference type="InterPro" id="IPR025525">
    <property type="entry name" value="hAT-like_transposase_RNase-H"/>
</dbReference>
<dbReference type="InterPro" id="IPR008906">
    <property type="entry name" value="HATC_C_dom"/>
</dbReference>
<dbReference type="InterPro" id="IPR012337">
    <property type="entry name" value="RNaseH-like_sf"/>
</dbReference>
<dbReference type="InterPro" id="IPR003656">
    <property type="entry name" value="Znf_BED"/>
</dbReference>
<dbReference type="InterPro" id="IPR052035">
    <property type="entry name" value="ZnF_BED_domain_contain"/>
</dbReference>
<dbReference type="InterPro" id="IPR036236">
    <property type="entry name" value="Znf_C2H2_sf"/>
</dbReference>
<dbReference type="PANTHER" id="PTHR46481:SF10">
    <property type="entry name" value="ZINC FINGER BED DOMAIN-CONTAINING PROTEIN 39"/>
    <property type="match status" value="1"/>
</dbReference>
<dbReference type="PANTHER" id="PTHR46481">
    <property type="entry name" value="ZINC FINGER BED DOMAIN-CONTAINING PROTEIN 4"/>
    <property type="match status" value="1"/>
</dbReference>
<dbReference type="Pfam" id="PF05699">
    <property type="entry name" value="Dimer_Tnp_hAT"/>
    <property type="match status" value="1"/>
</dbReference>
<dbReference type="Pfam" id="PF14372">
    <property type="entry name" value="hAT-like_RNase-H"/>
    <property type="match status" value="1"/>
</dbReference>
<dbReference type="SMART" id="SM00614">
    <property type="entry name" value="ZnF_BED"/>
    <property type="match status" value="1"/>
</dbReference>
<dbReference type="SUPFAM" id="SSF57667">
    <property type="entry name" value="beta-beta-alpha zinc fingers"/>
    <property type="match status" value="1"/>
</dbReference>
<dbReference type="SUPFAM" id="SSF53098">
    <property type="entry name" value="Ribonuclease H-like"/>
    <property type="match status" value="1"/>
</dbReference>
<dbReference type="PROSITE" id="PS50808">
    <property type="entry name" value="ZF_BED"/>
    <property type="match status" value="1"/>
</dbReference>
<comment type="function">
    <text evidence="4">Transposase-like protein that is essential for plant growth and development. May regulate global gene expression by recruiting other cellular factors.</text>
</comment>
<comment type="subunit">
    <text evidence="1">Homodimer.</text>
</comment>
<comment type="subcellular location">
    <subcellularLocation>
        <location evidence="1">Nucleus</location>
    </subcellularLocation>
</comment>
<comment type="disruption phenotype">
    <text evidence="4">Reduced plant size and amount of seeds.</text>
</comment>